<reference key="1">
    <citation type="journal article" date="2008" name="PLoS Genet.">
        <title>Genomic islands in the pathogenic filamentous fungus Aspergillus fumigatus.</title>
        <authorList>
            <person name="Fedorova N.D."/>
            <person name="Khaldi N."/>
            <person name="Joardar V.S."/>
            <person name="Maiti R."/>
            <person name="Amedeo P."/>
            <person name="Anderson M.J."/>
            <person name="Crabtree J."/>
            <person name="Silva J.C."/>
            <person name="Badger J.H."/>
            <person name="Albarraq A."/>
            <person name="Angiuoli S."/>
            <person name="Bussey H."/>
            <person name="Bowyer P."/>
            <person name="Cotty P.J."/>
            <person name="Dyer P.S."/>
            <person name="Egan A."/>
            <person name="Galens K."/>
            <person name="Fraser-Liggett C.M."/>
            <person name="Haas B.J."/>
            <person name="Inman J.M."/>
            <person name="Kent R."/>
            <person name="Lemieux S."/>
            <person name="Malavazi I."/>
            <person name="Orvis J."/>
            <person name="Roemer T."/>
            <person name="Ronning C.M."/>
            <person name="Sundaram J.P."/>
            <person name="Sutton G."/>
            <person name="Turner G."/>
            <person name="Venter J.C."/>
            <person name="White O.R."/>
            <person name="Whitty B.R."/>
            <person name="Youngman P."/>
            <person name="Wolfe K.H."/>
            <person name="Goldman G.H."/>
            <person name="Wortman J.R."/>
            <person name="Jiang B."/>
            <person name="Denning D.W."/>
            <person name="Nierman W.C."/>
        </authorList>
    </citation>
    <scope>NUCLEOTIDE SEQUENCE [LARGE SCALE GENOMIC DNA]</scope>
    <source>
        <strain>ATCC 1007 / CBS 513.65 / DSM 816 / NCTC 3887 / NRRL 1 / QM 1276 / 107</strain>
    </source>
</reference>
<evidence type="ECO:0000250" key="1"/>
<evidence type="ECO:0000255" key="2">
    <source>
        <dbReference type="PROSITE-ProRule" id="PRU00541"/>
    </source>
</evidence>
<evidence type="ECO:0000255" key="3">
    <source>
        <dbReference type="PROSITE-ProRule" id="PRU00542"/>
    </source>
</evidence>
<evidence type="ECO:0000256" key="4">
    <source>
        <dbReference type="SAM" id="MobiDB-lite"/>
    </source>
</evidence>
<evidence type="ECO:0000305" key="5"/>
<sequence length="823" mass="92965">MAPTTGPRNTKNAKPAVQRSKTLKRKRGQEELSSLIQRVEGLDLKESFESFSDLPLSEPTLSGLTSSHFKTLTDIQSRAISHALKGRDVLGAAKTGSGKTLAFLVPVLENLYRRQWAEHDGLGALILSPTRELAIQIFEVLRKIGRYHTFSAGLVIGGKSLREEQERLGRMNILVCTPGRMLQHLDQTALFDTYNLQMLVLDEADRILDLGFQQTVDAIVGHLPKERQTLLFSATQTKKVSDLARLSLRDPEYVAVHETASTATPAKLQQHYVIAPLPQKLDILWSFIRSNLKSKTMVFFSSGKQVRFVYESFRHMQPGIPLMHLHGRQKQGGRLDIMTNFSQAKHCVLFSTDVAARGLDFPAVDWVIQMDCPEDADTYIHRVGRTARYGRDGRAVLFLDPSEEEGMLKRLEQKKVPIEKINIKANKQQSIKDQLQNMCFKDPELKYIGQKAFISYVKSVYIQKDKEIFKLKELKLDEFASSLGLPGAPRIKFIKGDDTKQRKNAPRAAAHLSSDDEAGSDAEEGEPKTKKKEEPQVRTKYDRMFERRNQDVLAEHYSKLINDDGTMVAPPNAGAGADADEDDDFLSVKRRFDVGDETLGMSSDDSDEEDDDDDETSPKKETKVVHIDGKEALVIDSKRREKLLKSKKKLLKFKGKGTKLVYDDEGNAHEVYELEDEDQFKARGDAKEQKAKFLEEEAERTRLADLEDKEIAKQKRREKKEKRKARERELLAEAEDEEETVVQLPPYEGDHDMDGGFSASEEEEEAARPSKKPKVKFAEPDESDKGSEPWYKKSKRTDDKGGSQAPQIQTLEDLESLASGLLG</sequence>
<keyword id="KW-0067">ATP-binding</keyword>
<keyword id="KW-0347">Helicase</keyword>
<keyword id="KW-0378">Hydrolase</keyword>
<keyword id="KW-0547">Nucleotide-binding</keyword>
<keyword id="KW-0539">Nucleus</keyword>
<keyword id="KW-1185">Reference proteome</keyword>
<keyword id="KW-0690">Ribosome biogenesis</keyword>
<keyword id="KW-0694">RNA-binding</keyword>
<keyword id="KW-0698">rRNA processing</keyword>
<comment type="function">
    <text evidence="1">ATP-dependent RNA helicase required for ribosome biogenesis. Involved in the release of U14 snoRNA in pre-ribosomal complexes. Required for pre-rRNA cleavage at site A2 (By similarity).</text>
</comment>
<comment type="catalytic activity">
    <reaction>
        <text>ATP + H2O = ADP + phosphate + H(+)</text>
        <dbReference type="Rhea" id="RHEA:13065"/>
        <dbReference type="ChEBI" id="CHEBI:15377"/>
        <dbReference type="ChEBI" id="CHEBI:15378"/>
        <dbReference type="ChEBI" id="CHEBI:30616"/>
        <dbReference type="ChEBI" id="CHEBI:43474"/>
        <dbReference type="ChEBI" id="CHEBI:456216"/>
        <dbReference type="EC" id="3.6.4.13"/>
    </reaction>
</comment>
<comment type="subunit">
    <text evidence="1">Interacts with the U3 and U14 snoRNAs. Associates with pre-ribosomal complexes (By similarity).</text>
</comment>
<comment type="subcellular location">
    <subcellularLocation>
        <location evidence="1">Nucleus</location>
        <location evidence="1">Nucleolus</location>
    </subcellularLocation>
</comment>
<comment type="domain">
    <text>The Q motif is unique to and characteristic of the DEAD box family of RNA helicases and controls ATP binding and hydrolysis.</text>
</comment>
<comment type="similarity">
    <text evidence="5">Belongs to the DEAD box helicase family. DDX10/DBP4 subfamily.</text>
</comment>
<proteinExistence type="inferred from homology"/>
<organism>
    <name type="scientific">Aspergillus clavatus (strain ATCC 1007 / CBS 513.65 / DSM 816 / NCTC 3887 / NRRL 1 / QM 1276 / 107)</name>
    <dbReference type="NCBI Taxonomy" id="344612"/>
    <lineage>
        <taxon>Eukaryota</taxon>
        <taxon>Fungi</taxon>
        <taxon>Dikarya</taxon>
        <taxon>Ascomycota</taxon>
        <taxon>Pezizomycotina</taxon>
        <taxon>Eurotiomycetes</taxon>
        <taxon>Eurotiomycetidae</taxon>
        <taxon>Eurotiales</taxon>
        <taxon>Aspergillaceae</taxon>
        <taxon>Aspergillus</taxon>
        <taxon>Aspergillus subgen. Fumigati</taxon>
    </lineage>
</organism>
<protein>
    <recommendedName>
        <fullName>ATP-dependent RNA helicase dbp4</fullName>
        <ecNumber>3.6.4.13</ecNumber>
    </recommendedName>
</protein>
<accession>A1CTZ2</accession>
<dbReference type="EC" id="3.6.4.13"/>
<dbReference type="EMBL" id="DS027060">
    <property type="protein sequence ID" value="EAW06779.1"/>
    <property type="molecule type" value="Genomic_DNA"/>
</dbReference>
<dbReference type="RefSeq" id="XP_001268205.1">
    <property type="nucleotide sequence ID" value="XM_001268204.1"/>
</dbReference>
<dbReference type="SMR" id="A1CTZ2"/>
<dbReference type="STRING" id="344612.A1CTZ2"/>
<dbReference type="EnsemblFungi" id="EAW06779">
    <property type="protein sequence ID" value="EAW06779"/>
    <property type="gene ID" value="ACLA_084740"/>
</dbReference>
<dbReference type="GeneID" id="4700335"/>
<dbReference type="KEGG" id="act:ACLA_084740"/>
<dbReference type="VEuPathDB" id="FungiDB:ACLA_084740"/>
<dbReference type="eggNOG" id="KOG0343">
    <property type="taxonomic scope" value="Eukaryota"/>
</dbReference>
<dbReference type="HOGENOM" id="CLU_003041_26_1_1"/>
<dbReference type="OMA" id="YDKMFER"/>
<dbReference type="OrthoDB" id="10259640at2759"/>
<dbReference type="Proteomes" id="UP000006701">
    <property type="component" value="Unassembled WGS sequence"/>
</dbReference>
<dbReference type="GO" id="GO:0005730">
    <property type="term" value="C:nucleolus"/>
    <property type="evidence" value="ECO:0007669"/>
    <property type="project" value="UniProtKB-SubCell"/>
</dbReference>
<dbReference type="GO" id="GO:0032040">
    <property type="term" value="C:small-subunit processome"/>
    <property type="evidence" value="ECO:0007669"/>
    <property type="project" value="EnsemblFungi"/>
</dbReference>
<dbReference type="GO" id="GO:0005524">
    <property type="term" value="F:ATP binding"/>
    <property type="evidence" value="ECO:0007669"/>
    <property type="project" value="UniProtKB-KW"/>
</dbReference>
<dbReference type="GO" id="GO:0016887">
    <property type="term" value="F:ATP hydrolysis activity"/>
    <property type="evidence" value="ECO:0007669"/>
    <property type="project" value="RHEA"/>
</dbReference>
<dbReference type="GO" id="GO:0042802">
    <property type="term" value="F:identical protein binding"/>
    <property type="evidence" value="ECO:0007669"/>
    <property type="project" value="EnsemblFungi"/>
</dbReference>
<dbReference type="GO" id="GO:0003723">
    <property type="term" value="F:RNA binding"/>
    <property type="evidence" value="ECO:0007669"/>
    <property type="project" value="UniProtKB-KW"/>
</dbReference>
<dbReference type="GO" id="GO:0003724">
    <property type="term" value="F:RNA helicase activity"/>
    <property type="evidence" value="ECO:0007669"/>
    <property type="project" value="UniProtKB-EC"/>
</dbReference>
<dbReference type="GO" id="GO:0006364">
    <property type="term" value="P:rRNA processing"/>
    <property type="evidence" value="ECO:0007669"/>
    <property type="project" value="UniProtKB-KW"/>
</dbReference>
<dbReference type="CDD" id="cd17941">
    <property type="entry name" value="DEADc_DDX10"/>
    <property type="match status" value="1"/>
</dbReference>
<dbReference type="CDD" id="cd18787">
    <property type="entry name" value="SF2_C_DEAD"/>
    <property type="match status" value="1"/>
</dbReference>
<dbReference type="Gene3D" id="3.40.50.300">
    <property type="entry name" value="P-loop containing nucleotide triphosphate hydrolases"/>
    <property type="match status" value="2"/>
</dbReference>
<dbReference type="InterPro" id="IPR011545">
    <property type="entry name" value="DEAD/DEAH_box_helicase_dom"/>
</dbReference>
<dbReference type="InterPro" id="IPR014001">
    <property type="entry name" value="Helicase_ATP-bd"/>
</dbReference>
<dbReference type="InterPro" id="IPR001650">
    <property type="entry name" value="Helicase_C-like"/>
</dbReference>
<dbReference type="InterPro" id="IPR027417">
    <property type="entry name" value="P-loop_NTPase"/>
</dbReference>
<dbReference type="InterPro" id="IPR000629">
    <property type="entry name" value="RNA-helicase_DEAD-box_CS"/>
</dbReference>
<dbReference type="InterPro" id="IPR014014">
    <property type="entry name" value="RNA_helicase_DEAD_Q_motif"/>
</dbReference>
<dbReference type="InterPro" id="IPR025313">
    <property type="entry name" value="SPB4-like_CTE"/>
</dbReference>
<dbReference type="PANTHER" id="PTHR24031">
    <property type="entry name" value="RNA HELICASE"/>
    <property type="match status" value="1"/>
</dbReference>
<dbReference type="Pfam" id="PF13959">
    <property type="entry name" value="CTE_SPB4"/>
    <property type="match status" value="1"/>
</dbReference>
<dbReference type="Pfam" id="PF00270">
    <property type="entry name" value="DEAD"/>
    <property type="match status" value="1"/>
</dbReference>
<dbReference type="Pfam" id="PF00271">
    <property type="entry name" value="Helicase_C"/>
    <property type="match status" value="1"/>
</dbReference>
<dbReference type="SMART" id="SM00487">
    <property type="entry name" value="DEXDc"/>
    <property type="match status" value="1"/>
</dbReference>
<dbReference type="SMART" id="SM01178">
    <property type="entry name" value="DUF4217"/>
    <property type="match status" value="1"/>
</dbReference>
<dbReference type="SMART" id="SM00490">
    <property type="entry name" value="HELICc"/>
    <property type="match status" value="1"/>
</dbReference>
<dbReference type="SUPFAM" id="SSF52540">
    <property type="entry name" value="P-loop containing nucleoside triphosphate hydrolases"/>
    <property type="match status" value="1"/>
</dbReference>
<dbReference type="PROSITE" id="PS00039">
    <property type="entry name" value="DEAD_ATP_HELICASE"/>
    <property type="match status" value="1"/>
</dbReference>
<dbReference type="PROSITE" id="PS51192">
    <property type="entry name" value="HELICASE_ATP_BIND_1"/>
    <property type="match status" value="1"/>
</dbReference>
<dbReference type="PROSITE" id="PS51194">
    <property type="entry name" value="HELICASE_CTER"/>
    <property type="match status" value="1"/>
</dbReference>
<dbReference type="PROSITE" id="PS51195">
    <property type="entry name" value="Q_MOTIF"/>
    <property type="match status" value="1"/>
</dbReference>
<name>DBP4_ASPCL</name>
<gene>
    <name type="primary">dbp4</name>
    <name type="ORF">ACLA_084740</name>
</gene>
<feature type="chain" id="PRO_0000281699" description="ATP-dependent RNA helicase dbp4">
    <location>
        <begin position="1"/>
        <end position="823"/>
    </location>
</feature>
<feature type="domain" description="Helicase ATP-binding" evidence="2">
    <location>
        <begin position="80"/>
        <end position="254"/>
    </location>
</feature>
<feature type="domain" description="Helicase C-terminal" evidence="3">
    <location>
        <begin position="280"/>
        <end position="439"/>
    </location>
</feature>
<feature type="region of interest" description="Disordered" evidence="4">
    <location>
        <begin position="1"/>
        <end position="30"/>
    </location>
</feature>
<feature type="region of interest" description="Disordered" evidence="4">
    <location>
        <begin position="494"/>
        <end position="545"/>
    </location>
</feature>
<feature type="region of interest" description="Disordered" evidence="4">
    <location>
        <begin position="563"/>
        <end position="625"/>
    </location>
</feature>
<feature type="region of interest" description="Disordered" evidence="4">
    <location>
        <begin position="702"/>
        <end position="823"/>
    </location>
</feature>
<feature type="short sequence motif" description="Q motif">
    <location>
        <begin position="49"/>
        <end position="77"/>
    </location>
</feature>
<feature type="short sequence motif" description="DEAD box">
    <location>
        <begin position="202"/>
        <end position="205"/>
    </location>
</feature>
<feature type="compositionally biased region" description="Polar residues" evidence="4">
    <location>
        <begin position="1"/>
        <end position="12"/>
    </location>
</feature>
<feature type="compositionally biased region" description="Acidic residues" evidence="4">
    <location>
        <begin position="515"/>
        <end position="524"/>
    </location>
</feature>
<feature type="compositionally biased region" description="Basic and acidic residues" evidence="4">
    <location>
        <begin position="525"/>
        <end position="545"/>
    </location>
</feature>
<feature type="compositionally biased region" description="Acidic residues" evidence="4">
    <location>
        <begin position="604"/>
        <end position="615"/>
    </location>
</feature>
<feature type="compositionally biased region" description="Basic and acidic residues" evidence="4">
    <location>
        <begin position="616"/>
        <end position="625"/>
    </location>
</feature>
<feature type="compositionally biased region" description="Basic and acidic residues" evidence="4">
    <location>
        <begin position="702"/>
        <end position="713"/>
    </location>
</feature>
<feature type="compositionally biased region" description="Basic residues" evidence="4">
    <location>
        <begin position="714"/>
        <end position="723"/>
    </location>
</feature>
<feature type="compositionally biased region" description="Basic and acidic residues" evidence="4">
    <location>
        <begin position="776"/>
        <end position="801"/>
    </location>
</feature>
<feature type="binding site" evidence="2">
    <location>
        <begin position="93"/>
        <end position="100"/>
    </location>
    <ligand>
        <name>ATP</name>
        <dbReference type="ChEBI" id="CHEBI:30616"/>
    </ligand>
</feature>